<name>ATPG_BURM7</name>
<gene>
    <name evidence="1" type="primary">atpG</name>
    <name type="ordered locus">BMA10247_3014</name>
</gene>
<keyword id="KW-0066">ATP synthesis</keyword>
<keyword id="KW-0997">Cell inner membrane</keyword>
<keyword id="KW-1003">Cell membrane</keyword>
<keyword id="KW-0139">CF(1)</keyword>
<keyword id="KW-0375">Hydrogen ion transport</keyword>
<keyword id="KW-0406">Ion transport</keyword>
<keyword id="KW-0472">Membrane</keyword>
<keyword id="KW-0813">Transport</keyword>
<proteinExistence type="inferred from homology"/>
<organism>
    <name type="scientific">Burkholderia mallei (strain NCTC 10247)</name>
    <dbReference type="NCBI Taxonomy" id="320389"/>
    <lineage>
        <taxon>Bacteria</taxon>
        <taxon>Pseudomonadati</taxon>
        <taxon>Pseudomonadota</taxon>
        <taxon>Betaproteobacteria</taxon>
        <taxon>Burkholderiales</taxon>
        <taxon>Burkholderiaceae</taxon>
        <taxon>Burkholderia</taxon>
        <taxon>pseudomallei group</taxon>
    </lineage>
</organism>
<accession>A3MQJ8</accession>
<protein>
    <recommendedName>
        <fullName evidence="1">ATP synthase gamma chain</fullName>
    </recommendedName>
    <alternativeName>
        <fullName evidence="1">ATP synthase F1 sector gamma subunit</fullName>
    </alternativeName>
    <alternativeName>
        <fullName evidence="1">F-ATPase gamma subunit</fullName>
    </alternativeName>
</protein>
<feature type="chain" id="PRO_1000053169" description="ATP synthase gamma chain">
    <location>
        <begin position="1"/>
        <end position="291"/>
    </location>
</feature>
<dbReference type="EMBL" id="CP000548">
    <property type="protein sequence ID" value="ABO05415.1"/>
    <property type="molecule type" value="Genomic_DNA"/>
</dbReference>
<dbReference type="RefSeq" id="WP_004195831.1">
    <property type="nucleotide sequence ID" value="NZ_CP007802.1"/>
</dbReference>
<dbReference type="SMR" id="A3MQJ8"/>
<dbReference type="GeneID" id="92980625"/>
<dbReference type="KEGG" id="bmaz:BM44_336"/>
<dbReference type="KEGG" id="bmn:BMA10247_3014"/>
<dbReference type="PATRIC" id="fig|320389.8.peg.371"/>
<dbReference type="GO" id="GO:0005886">
    <property type="term" value="C:plasma membrane"/>
    <property type="evidence" value="ECO:0007669"/>
    <property type="project" value="UniProtKB-SubCell"/>
</dbReference>
<dbReference type="GO" id="GO:0045259">
    <property type="term" value="C:proton-transporting ATP synthase complex"/>
    <property type="evidence" value="ECO:0007669"/>
    <property type="project" value="UniProtKB-KW"/>
</dbReference>
<dbReference type="GO" id="GO:0005524">
    <property type="term" value="F:ATP binding"/>
    <property type="evidence" value="ECO:0007669"/>
    <property type="project" value="UniProtKB-UniRule"/>
</dbReference>
<dbReference type="GO" id="GO:0046933">
    <property type="term" value="F:proton-transporting ATP synthase activity, rotational mechanism"/>
    <property type="evidence" value="ECO:0007669"/>
    <property type="project" value="UniProtKB-UniRule"/>
</dbReference>
<dbReference type="GO" id="GO:0042777">
    <property type="term" value="P:proton motive force-driven plasma membrane ATP synthesis"/>
    <property type="evidence" value="ECO:0007669"/>
    <property type="project" value="UniProtKB-UniRule"/>
</dbReference>
<dbReference type="CDD" id="cd12151">
    <property type="entry name" value="F1-ATPase_gamma"/>
    <property type="match status" value="1"/>
</dbReference>
<dbReference type="FunFam" id="1.10.287.80:FF:000005">
    <property type="entry name" value="ATP synthase gamma chain"/>
    <property type="match status" value="1"/>
</dbReference>
<dbReference type="Gene3D" id="3.40.1380.10">
    <property type="match status" value="1"/>
</dbReference>
<dbReference type="Gene3D" id="1.10.287.80">
    <property type="entry name" value="ATP synthase, gamma subunit, helix hairpin domain"/>
    <property type="match status" value="1"/>
</dbReference>
<dbReference type="HAMAP" id="MF_00815">
    <property type="entry name" value="ATP_synth_gamma_bact"/>
    <property type="match status" value="1"/>
</dbReference>
<dbReference type="InterPro" id="IPR035968">
    <property type="entry name" value="ATP_synth_F1_ATPase_gsu"/>
</dbReference>
<dbReference type="InterPro" id="IPR000131">
    <property type="entry name" value="ATP_synth_F1_gsu"/>
</dbReference>
<dbReference type="InterPro" id="IPR023632">
    <property type="entry name" value="ATP_synth_F1_gsu_CS"/>
</dbReference>
<dbReference type="NCBIfam" id="TIGR01146">
    <property type="entry name" value="ATPsyn_F1gamma"/>
    <property type="match status" value="1"/>
</dbReference>
<dbReference type="NCBIfam" id="NF004144">
    <property type="entry name" value="PRK05621.1-1"/>
    <property type="match status" value="1"/>
</dbReference>
<dbReference type="PANTHER" id="PTHR11693">
    <property type="entry name" value="ATP SYNTHASE GAMMA CHAIN"/>
    <property type="match status" value="1"/>
</dbReference>
<dbReference type="PANTHER" id="PTHR11693:SF22">
    <property type="entry name" value="ATP SYNTHASE SUBUNIT GAMMA, MITOCHONDRIAL"/>
    <property type="match status" value="1"/>
</dbReference>
<dbReference type="Pfam" id="PF00231">
    <property type="entry name" value="ATP-synt"/>
    <property type="match status" value="1"/>
</dbReference>
<dbReference type="PRINTS" id="PR00126">
    <property type="entry name" value="ATPASEGAMMA"/>
</dbReference>
<dbReference type="SUPFAM" id="SSF52943">
    <property type="entry name" value="ATP synthase (F1-ATPase), gamma subunit"/>
    <property type="match status" value="1"/>
</dbReference>
<dbReference type="PROSITE" id="PS00153">
    <property type="entry name" value="ATPASE_GAMMA"/>
    <property type="match status" value="1"/>
</dbReference>
<sequence>MAGMKEIRGKIKSVQNTRKITKAMEMVAASKMRRAQERMRAARPYAEKVRAIAAHMSRANPEYRHPFMVANDGVKTAGMILVTTDKGLCGGLNTNVLRASLQKFKELEEQGQKVEATAIGGKGLGFLNRFGAKVISQVVHLGDTPHLDKLIGAVKTQLDLYSEGKLSAVYLAYTRFVNTMKQETVIEQLLPLSSEHFDANDGTPATSWDYIYEPDAQAVVDELLVRYVEALVYQAVAENMASEQSARMVAMKAASDNAKTVISELQLSYNKSRQAAITKELSEIVGGAAAV</sequence>
<evidence type="ECO:0000255" key="1">
    <source>
        <dbReference type="HAMAP-Rule" id="MF_00815"/>
    </source>
</evidence>
<reference key="1">
    <citation type="journal article" date="2010" name="Genome Biol. Evol.">
        <title>Continuing evolution of Burkholderia mallei through genome reduction and large-scale rearrangements.</title>
        <authorList>
            <person name="Losada L."/>
            <person name="Ronning C.M."/>
            <person name="DeShazer D."/>
            <person name="Woods D."/>
            <person name="Fedorova N."/>
            <person name="Kim H.S."/>
            <person name="Shabalina S.A."/>
            <person name="Pearson T.R."/>
            <person name="Brinkac L."/>
            <person name="Tan P."/>
            <person name="Nandi T."/>
            <person name="Crabtree J."/>
            <person name="Badger J."/>
            <person name="Beckstrom-Sternberg S."/>
            <person name="Saqib M."/>
            <person name="Schutzer S.E."/>
            <person name="Keim P."/>
            <person name="Nierman W.C."/>
        </authorList>
    </citation>
    <scope>NUCLEOTIDE SEQUENCE [LARGE SCALE GENOMIC DNA]</scope>
    <source>
        <strain>NCTC 10247</strain>
    </source>
</reference>
<comment type="function">
    <text evidence="1">Produces ATP from ADP in the presence of a proton gradient across the membrane. The gamma chain is believed to be important in regulating ATPase activity and the flow of protons through the CF(0) complex.</text>
</comment>
<comment type="subunit">
    <text evidence="1">F-type ATPases have 2 components, CF(1) - the catalytic core - and CF(0) - the membrane proton channel. CF(1) has five subunits: alpha(3), beta(3), gamma(1), delta(1), epsilon(1). CF(0) has three main subunits: a, b and c.</text>
</comment>
<comment type="subcellular location">
    <subcellularLocation>
        <location evidence="1">Cell inner membrane</location>
        <topology evidence="1">Peripheral membrane protein</topology>
    </subcellularLocation>
</comment>
<comment type="similarity">
    <text evidence="1">Belongs to the ATPase gamma chain family.</text>
</comment>